<proteinExistence type="inferred from homology"/>
<comment type="function">
    <text evidence="1">Hydrolyzes the pyrophosphate bond of UDP-2,3-diacylglucosamine to yield 2,3-diacylglucosamine 1-phosphate (lipid X) and UMP by catalyzing the attack of water at the alpha-P atom. Involved in the biosynthesis of lipid A, a phosphorylated glycolipid that anchors the lipopolysaccharide to the outer membrane of the cell.</text>
</comment>
<comment type="catalytic activity">
    <reaction evidence="1">
        <text>UDP-2-N,3-O-bis[(3R)-3-hydroxytetradecanoyl]-alpha-D-glucosamine + H2O = 2-N,3-O-bis[(3R)-3-hydroxytetradecanoyl]-alpha-D-glucosaminyl 1-phosphate + UMP + 2 H(+)</text>
        <dbReference type="Rhea" id="RHEA:25213"/>
        <dbReference type="ChEBI" id="CHEBI:15377"/>
        <dbReference type="ChEBI" id="CHEBI:15378"/>
        <dbReference type="ChEBI" id="CHEBI:57865"/>
        <dbReference type="ChEBI" id="CHEBI:57957"/>
        <dbReference type="ChEBI" id="CHEBI:78847"/>
        <dbReference type="EC" id="3.6.1.54"/>
    </reaction>
</comment>
<comment type="cofactor">
    <cofactor evidence="1">
        <name>Mn(2+)</name>
        <dbReference type="ChEBI" id="CHEBI:29035"/>
    </cofactor>
    <text evidence="1">Binds 2 Mn(2+) ions per subunit in a binuclear metal center.</text>
</comment>
<comment type="pathway">
    <text evidence="1">Glycolipid biosynthesis; lipid IV(A) biosynthesis; lipid IV(A) from (3R)-3-hydroxytetradecanoyl-[acyl-carrier-protein] and UDP-N-acetyl-alpha-D-glucosamine: step 4/6.</text>
</comment>
<comment type="subcellular location">
    <subcellularLocation>
        <location evidence="1">Cell inner membrane</location>
        <topology evidence="1">Peripheral membrane protein</topology>
        <orientation evidence="1">Cytoplasmic side</orientation>
    </subcellularLocation>
</comment>
<comment type="similarity">
    <text evidence="1">Belongs to the LpxH family.</text>
</comment>
<gene>
    <name evidence="1" type="primary">lpxH</name>
    <name type="ordered locus">CGSHiGG_07140</name>
</gene>
<accession>A5UHN7</accession>
<dbReference type="EC" id="3.6.1.54" evidence="1"/>
<dbReference type="EMBL" id="CP000672">
    <property type="protein sequence ID" value="ABR00293.1"/>
    <property type="molecule type" value="Genomic_DNA"/>
</dbReference>
<dbReference type="SMR" id="A5UHN7"/>
<dbReference type="KEGG" id="hiq:CGSHiGG_07140"/>
<dbReference type="HOGENOM" id="CLU_074586_0_0_6"/>
<dbReference type="UniPathway" id="UPA00359">
    <property type="reaction ID" value="UER00480"/>
</dbReference>
<dbReference type="Proteomes" id="UP000001990">
    <property type="component" value="Chromosome"/>
</dbReference>
<dbReference type="GO" id="GO:0005737">
    <property type="term" value="C:cytoplasm"/>
    <property type="evidence" value="ECO:0007669"/>
    <property type="project" value="InterPro"/>
</dbReference>
<dbReference type="GO" id="GO:0019897">
    <property type="term" value="C:extrinsic component of plasma membrane"/>
    <property type="evidence" value="ECO:0007669"/>
    <property type="project" value="UniProtKB-UniRule"/>
</dbReference>
<dbReference type="GO" id="GO:0030145">
    <property type="term" value="F:manganese ion binding"/>
    <property type="evidence" value="ECO:0007669"/>
    <property type="project" value="UniProtKB-UniRule"/>
</dbReference>
<dbReference type="GO" id="GO:0008758">
    <property type="term" value="F:UDP-2,3-diacylglucosamine hydrolase activity"/>
    <property type="evidence" value="ECO:0007669"/>
    <property type="project" value="UniProtKB-UniRule"/>
</dbReference>
<dbReference type="GO" id="GO:0009245">
    <property type="term" value="P:lipid A biosynthetic process"/>
    <property type="evidence" value="ECO:0007669"/>
    <property type="project" value="UniProtKB-UniRule"/>
</dbReference>
<dbReference type="CDD" id="cd07398">
    <property type="entry name" value="MPP_YbbF-LpxH"/>
    <property type="match status" value="1"/>
</dbReference>
<dbReference type="Gene3D" id="3.60.21.10">
    <property type="match status" value="1"/>
</dbReference>
<dbReference type="HAMAP" id="MF_00575">
    <property type="entry name" value="LpxH"/>
    <property type="match status" value="1"/>
</dbReference>
<dbReference type="InterPro" id="IPR004843">
    <property type="entry name" value="Calcineurin-like_PHP_ApaH"/>
</dbReference>
<dbReference type="InterPro" id="IPR043461">
    <property type="entry name" value="LpxH-like"/>
</dbReference>
<dbReference type="InterPro" id="IPR029052">
    <property type="entry name" value="Metallo-depent_PP-like"/>
</dbReference>
<dbReference type="InterPro" id="IPR010138">
    <property type="entry name" value="UDP-diacylglucosamine_Hdrlase"/>
</dbReference>
<dbReference type="NCBIfam" id="TIGR01854">
    <property type="entry name" value="lipid_A_lpxH"/>
    <property type="match status" value="1"/>
</dbReference>
<dbReference type="NCBIfam" id="NF003743">
    <property type="entry name" value="PRK05340.1"/>
    <property type="match status" value="1"/>
</dbReference>
<dbReference type="PANTHER" id="PTHR34990:SF1">
    <property type="entry name" value="UDP-2,3-DIACYLGLUCOSAMINE HYDROLASE"/>
    <property type="match status" value="1"/>
</dbReference>
<dbReference type="PANTHER" id="PTHR34990">
    <property type="entry name" value="UDP-2,3-DIACYLGLUCOSAMINE HYDROLASE-RELATED"/>
    <property type="match status" value="1"/>
</dbReference>
<dbReference type="Pfam" id="PF00149">
    <property type="entry name" value="Metallophos"/>
    <property type="match status" value="1"/>
</dbReference>
<dbReference type="SUPFAM" id="SSF56300">
    <property type="entry name" value="Metallo-dependent phosphatases"/>
    <property type="match status" value="1"/>
</dbReference>
<organism>
    <name type="scientific">Haemophilus influenzae (strain PittGG)</name>
    <dbReference type="NCBI Taxonomy" id="374931"/>
    <lineage>
        <taxon>Bacteria</taxon>
        <taxon>Pseudomonadati</taxon>
        <taxon>Pseudomonadota</taxon>
        <taxon>Gammaproteobacteria</taxon>
        <taxon>Pasteurellales</taxon>
        <taxon>Pasteurellaceae</taxon>
        <taxon>Haemophilus</taxon>
    </lineage>
</organism>
<name>LPXH_HAEIG</name>
<feature type="chain" id="PRO_1000025057" description="UDP-2,3-diacylglucosamine hydrolase">
    <location>
        <begin position="1"/>
        <end position="237"/>
    </location>
</feature>
<feature type="binding site" evidence="1">
    <location>
        <position position="9"/>
    </location>
    <ligand>
        <name>Mn(2+)</name>
        <dbReference type="ChEBI" id="CHEBI:29035"/>
        <label>1</label>
    </ligand>
</feature>
<feature type="binding site" evidence="1">
    <location>
        <position position="11"/>
    </location>
    <ligand>
        <name>Mn(2+)</name>
        <dbReference type="ChEBI" id="CHEBI:29035"/>
        <label>1</label>
    </ligand>
</feature>
<feature type="binding site" evidence="1">
    <location>
        <position position="42"/>
    </location>
    <ligand>
        <name>Mn(2+)</name>
        <dbReference type="ChEBI" id="CHEBI:29035"/>
        <label>1</label>
    </ligand>
</feature>
<feature type="binding site" evidence="1">
    <location>
        <position position="42"/>
    </location>
    <ligand>
        <name>Mn(2+)</name>
        <dbReference type="ChEBI" id="CHEBI:29035"/>
        <label>2</label>
    </ligand>
</feature>
<feature type="binding site" evidence="1">
    <location>
        <begin position="80"/>
        <end position="81"/>
    </location>
    <ligand>
        <name>substrate</name>
    </ligand>
</feature>
<feature type="binding site" evidence="1">
    <location>
        <position position="80"/>
    </location>
    <ligand>
        <name>Mn(2+)</name>
        <dbReference type="ChEBI" id="CHEBI:29035"/>
        <label>2</label>
    </ligand>
</feature>
<feature type="binding site" evidence="1">
    <location>
        <position position="115"/>
    </location>
    <ligand>
        <name>Mn(2+)</name>
        <dbReference type="ChEBI" id="CHEBI:29035"/>
        <label>2</label>
    </ligand>
</feature>
<feature type="binding site" evidence="1">
    <location>
        <position position="123"/>
    </location>
    <ligand>
        <name>substrate</name>
    </ligand>
</feature>
<feature type="binding site" evidence="1">
    <location>
        <position position="161"/>
    </location>
    <ligand>
        <name>substrate</name>
    </ligand>
</feature>
<feature type="binding site" evidence="1">
    <location>
        <position position="165"/>
    </location>
    <ligand>
        <name>substrate</name>
    </ligand>
</feature>
<feature type="binding site" evidence="1">
    <location>
        <position position="168"/>
    </location>
    <ligand>
        <name>substrate</name>
    </ligand>
</feature>
<feature type="binding site" evidence="1">
    <location>
        <position position="196"/>
    </location>
    <ligand>
        <name>Mn(2+)</name>
        <dbReference type="ChEBI" id="CHEBI:29035"/>
        <label>2</label>
    </ligand>
</feature>
<feature type="binding site" evidence="1">
    <location>
        <position position="196"/>
    </location>
    <ligand>
        <name>substrate</name>
    </ligand>
</feature>
<feature type="binding site" evidence="1">
    <location>
        <position position="198"/>
    </location>
    <ligand>
        <name>Mn(2+)</name>
        <dbReference type="ChEBI" id="CHEBI:29035"/>
        <label>1</label>
    </ligand>
</feature>
<evidence type="ECO:0000255" key="1">
    <source>
        <dbReference type="HAMAP-Rule" id="MF_00575"/>
    </source>
</evidence>
<reference key="1">
    <citation type="journal article" date="2007" name="Genome Biol.">
        <title>Characterization and modeling of the Haemophilus influenzae core and supragenomes based on the complete genomic sequences of Rd and 12 clinical nontypeable strains.</title>
        <authorList>
            <person name="Hogg J.S."/>
            <person name="Hu F.Z."/>
            <person name="Janto B."/>
            <person name="Boissy R."/>
            <person name="Hayes J."/>
            <person name="Keefe R."/>
            <person name="Post J.C."/>
            <person name="Ehrlich G.D."/>
        </authorList>
    </citation>
    <scope>NUCLEOTIDE SEQUENCE [LARGE SCALE GENOMIC DNA]</scope>
    <source>
        <strain>PittGG</strain>
    </source>
</reference>
<sequence length="237" mass="27726">MKHSYFISDLHLSETQPELTALFVDFMQNLAPQAERLYILGDLFDFWIGDDEQSTLIQQVKDLIKSVSNQGVQCYFQHGNRDFLIGERFSKETGAQLLPDYQLITLYDKKILLCHGDTLCIDDVAYQQFRRRVHQKWLQRLFLCLPLKVRLKIAEKIRAKSNQDKQAKSQEIMDINQAFTTEKVQEFGVNLLIHGHTHREAIHQQEGFTRIVLGDWRKNYASILKMDESGEFGFIKD</sequence>
<protein>
    <recommendedName>
        <fullName evidence="1">UDP-2,3-diacylglucosamine hydrolase</fullName>
        <ecNumber evidence="1">3.6.1.54</ecNumber>
    </recommendedName>
    <alternativeName>
        <fullName evidence="1">UDP-2,3-diacylglucosamine diphosphatase</fullName>
    </alternativeName>
</protein>
<keyword id="KW-0997">Cell inner membrane</keyword>
<keyword id="KW-1003">Cell membrane</keyword>
<keyword id="KW-0378">Hydrolase</keyword>
<keyword id="KW-0441">Lipid A biosynthesis</keyword>
<keyword id="KW-0444">Lipid biosynthesis</keyword>
<keyword id="KW-0443">Lipid metabolism</keyword>
<keyword id="KW-0464">Manganese</keyword>
<keyword id="KW-0472">Membrane</keyword>
<keyword id="KW-0479">Metal-binding</keyword>